<name>RQCH_STRR6</name>
<gene>
    <name evidence="1" type="primary">rqcH</name>
    <name type="synonym">flpA</name>
    <name evidence="3" type="synonym">pavA</name>
    <name type="ordered locus">spr0868</name>
</gene>
<organism>
    <name type="scientific">Streptococcus pneumoniae (strain ATCC BAA-255 / R6)</name>
    <dbReference type="NCBI Taxonomy" id="171101"/>
    <lineage>
        <taxon>Bacteria</taxon>
        <taxon>Bacillati</taxon>
        <taxon>Bacillota</taxon>
        <taxon>Bacilli</taxon>
        <taxon>Lactobacillales</taxon>
        <taxon>Streptococcaceae</taxon>
        <taxon>Streptococcus</taxon>
    </lineage>
</organism>
<feature type="chain" id="PRO_0000448047" description="Rqc2 homolog RqcH">
    <location>
        <begin position="1"/>
        <end position="551"/>
    </location>
</feature>
<feature type="region of interest" description="Required for fibronectin binding" evidence="2">
    <location>
        <begin position="363"/>
        <end position="551"/>
    </location>
</feature>
<feature type="sequence conflict" description="In Ref. 1; AAF05332." evidence="4" ref="1">
    <original>M</original>
    <variation>I</variation>
    <location>
        <position position="102"/>
    </location>
</feature>
<feature type="helix" evidence="5">
    <location>
        <begin position="5"/>
        <end position="19"/>
    </location>
</feature>
<feature type="strand" evidence="5">
    <location>
        <begin position="23"/>
        <end position="31"/>
    </location>
</feature>
<feature type="strand" evidence="5">
    <location>
        <begin position="34"/>
        <end position="41"/>
    </location>
</feature>
<feature type="strand" evidence="5">
    <location>
        <begin position="44"/>
        <end position="51"/>
    </location>
</feature>
<feature type="turn" evidence="5">
    <location>
        <begin position="54"/>
        <end position="56"/>
    </location>
</feature>
<feature type="strand" evidence="5">
    <location>
        <begin position="58"/>
        <end position="61"/>
    </location>
</feature>
<feature type="helix" evidence="5">
    <location>
        <begin position="74"/>
        <end position="83"/>
    </location>
</feature>
<feature type="strand" evidence="5">
    <location>
        <begin position="87"/>
        <end position="94"/>
    </location>
</feature>
<feature type="strand" evidence="5">
    <location>
        <begin position="97"/>
        <end position="107"/>
    </location>
</feature>
<feature type="strand" evidence="5">
    <location>
        <begin position="113"/>
        <end position="122"/>
    </location>
</feature>
<feature type="strand" evidence="5">
    <location>
        <begin position="127"/>
        <end position="133"/>
    </location>
</feature>
<feature type="turn" evidence="5">
    <location>
        <begin position="134"/>
        <end position="136"/>
    </location>
</feature>
<feature type="strand" evidence="5">
    <location>
        <begin position="138"/>
        <end position="144"/>
    </location>
</feature>
<feature type="turn" evidence="5">
    <location>
        <begin position="173"/>
        <end position="175"/>
    </location>
</feature>
<feature type="helix" evidence="5">
    <location>
        <begin position="178"/>
        <end position="187"/>
    </location>
</feature>
<feature type="helix" evidence="5">
    <location>
        <begin position="192"/>
        <end position="198"/>
    </location>
</feature>
<feature type="helix" evidence="5">
    <location>
        <begin position="204"/>
        <end position="227"/>
    </location>
</feature>
<feature type="strand" evidence="5">
    <location>
        <begin position="236"/>
        <end position="242"/>
    </location>
</feature>
<feature type="strand" evidence="5">
    <location>
        <begin position="247"/>
        <end position="249"/>
    </location>
</feature>
<feature type="helix" evidence="5">
    <location>
        <begin position="255"/>
        <end position="262"/>
    </location>
</feature>
<dbReference type="EMBL" id="AF181976">
    <property type="protein sequence ID" value="AAF05332.1"/>
    <property type="molecule type" value="Genomic_DNA"/>
</dbReference>
<dbReference type="EMBL" id="AE007317">
    <property type="protein sequence ID" value="AAK99672.1"/>
    <property type="status" value="ALT_INIT"/>
    <property type="molecule type" value="Genomic_DNA"/>
</dbReference>
<dbReference type="PIR" id="D97980">
    <property type="entry name" value="D97980"/>
</dbReference>
<dbReference type="RefSeq" id="NP_358462.1">
    <property type="nucleotide sequence ID" value="NC_003098.1"/>
</dbReference>
<dbReference type="RefSeq" id="WP_000006706.1">
    <property type="nucleotide sequence ID" value="NC_003098.1"/>
</dbReference>
<dbReference type="PDB" id="6PON">
    <property type="method" value="X-ray"/>
    <property type="resolution" value="2.40 A"/>
    <property type="chains" value="A/B=1-266"/>
</dbReference>
<dbReference type="PDBsum" id="6PON"/>
<dbReference type="SMR" id="Q8DQ36"/>
<dbReference type="STRING" id="171101.spr0868"/>
<dbReference type="KEGG" id="spr:spr0868"/>
<dbReference type="PATRIC" id="fig|171101.6.peg.956"/>
<dbReference type="eggNOG" id="COG1293">
    <property type="taxonomic scope" value="Bacteria"/>
</dbReference>
<dbReference type="HOGENOM" id="CLU_022481_2_1_9"/>
<dbReference type="Proteomes" id="UP000000586">
    <property type="component" value="Chromosome"/>
</dbReference>
<dbReference type="GO" id="GO:0009986">
    <property type="term" value="C:cell surface"/>
    <property type="evidence" value="ECO:0007669"/>
    <property type="project" value="UniProtKB-SubCell"/>
</dbReference>
<dbReference type="GO" id="GO:0005737">
    <property type="term" value="C:cytoplasm"/>
    <property type="evidence" value="ECO:0007669"/>
    <property type="project" value="UniProtKB-SubCell"/>
</dbReference>
<dbReference type="GO" id="GO:1990112">
    <property type="term" value="C:RQC complex"/>
    <property type="evidence" value="ECO:0000318"/>
    <property type="project" value="GO_Central"/>
</dbReference>
<dbReference type="GO" id="GO:0043023">
    <property type="term" value="F:ribosomal large subunit binding"/>
    <property type="evidence" value="ECO:0000318"/>
    <property type="project" value="GO_Central"/>
</dbReference>
<dbReference type="GO" id="GO:0019843">
    <property type="term" value="F:rRNA binding"/>
    <property type="evidence" value="ECO:0007669"/>
    <property type="project" value="UniProtKB-UniRule"/>
</dbReference>
<dbReference type="GO" id="GO:0000049">
    <property type="term" value="F:tRNA binding"/>
    <property type="evidence" value="ECO:0000318"/>
    <property type="project" value="GO_Central"/>
</dbReference>
<dbReference type="GO" id="GO:0072344">
    <property type="term" value="P:rescue of stalled ribosome"/>
    <property type="evidence" value="ECO:0000318"/>
    <property type="project" value="GO_Central"/>
</dbReference>
<dbReference type="FunFam" id="2.30.310.10:FF:000004">
    <property type="entry name" value="Fibronectin-binding protein A"/>
    <property type="match status" value="1"/>
</dbReference>
<dbReference type="Gene3D" id="3.40.970.40">
    <property type="entry name" value="fibrinogen binding protein from staphylococcus aureus domain like"/>
    <property type="match status" value="1"/>
</dbReference>
<dbReference type="Gene3D" id="2.30.310.10">
    <property type="entry name" value="ibrinogen binding protein from staphylococcus aureus domain"/>
    <property type="match status" value="1"/>
</dbReference>
<dbReference type="HAMAP" id="MF_00844_B">
    <property type="entry name" value="RqcH_B"/>
    <property type="match status" value="1"/>
</dbReference>
<dbReference type="InterPro" id="IPR008532">
    <property type="entry name" value="NFACT_RNA-bd"/>
</dbReference>
<dbReference type="InterPro" id="IPR051608">
    <property type="entry name" value="RQC_Subunit_NEMF"/>
</dbReference>
<dbReference type="InterPro" id="IPR043682">
    <property type="entry name" value="RqcH_bacterial"/>
</dbReference>
<dbReference type="PANTHER" id="PTHR15239">
    <property type="entry name" value="NUCLEAR EXPORT MEDIATOR FACTOR NEMF"/>
    <property type="match status" value="1"/>
</dbReference>
<dbReference type="PANTHER" id="PTHR15239:SF6">
    <property type="entry name" value="RIBOSOME QUALITY CONTROL COMPLEX SUBUNIT NEMF"/>
    <property type="match status" value="1"/>
</dbReference>
<dbReference type="Pfam" id="PF05670">
    <property type="entry name" value="NFACT-R_1"/>
    <property type="match status" value="1"/>
</dbReference>
<dbReference type="Pfam" id="PF05833">
    <property type="entry name" value="NFACT_N"/>
    <property type="match status" value="1"/>
</dbReference>
<comment type="function">
    <text evidence="1">Key component of the ribosome quality control system (RQC), a ribosome-associated complex that mediates the extraction of incompletely synthesized nascent chains from stalled ribosomes and their subsequent degradation. RqcH recruits Ala-charged tRNA, and with RqcP directs the elongation of stalled nascent chains on 50S ribosomal subunits, leading to non-templated C-terminal alanine extensions (Ala tail). The Ala tail promotes nascent chain degradation. May add between 1 and at least 8 Ala residues. Binds to stalled 50S ribosomal subunits.</text>
</comment>
<comment type="function">
    <text evidence="2">Recombinant protein binds to immobilized human fibronectin; binding is saturable and competed by heparin. Recombinant protein inhibits binding of whole cells to fibronectin.</text>
</comment>
<comment type="subunit">
    <text evidence="1 2">Associates with stalled 50S ribosomal subunits, binds to RqcP (By similarity). Interacts with human fibronectin (PubMed:11580843).</text>
</comment>
<comment type="subcellular location">
    <subcellularLocation>
        <location evidence="2">Cell surface</location>
    </subcellularLocation>
    <subcellularLocation>
        <location evidence="2">Cytoplasm</location>
    </subcellularLocation>
    <text evidence="2">Found on the cell surface in the region of the capsule in capsulated bacteria (strains NCTC 10319 and R36A).</text>
</comment>
<comment type="disruption phenotype">
    <text evidence="2">About 50% reduction of binding to immobilized human fibronectin. Greatly reduced mortality in mice (tested with encapsulated strain D39).</text>
</comment>
<comment type="similarity">
    <text evidence="1">Belongs to the NEMF family.</text>
</comment>
<comment type="caution">
    <text evidence="4">This strain is avirulent; testing for virulence is done in strain D39.</text>
</comment>
<comment type="sequence caution" evidence="4">
    <conflict type="erroneous initiation">
        <sequence resource="EMBL-CDS" id="AAK99672"/>
    </conflict>
    <text>Extended N-terminus.</text>
</comment>
<keyword id="KW-0002">3D-structure</keyword>
<keyword id="KW-0963">Cytoplasm</keyword>
<keyword id="KW-0648">Protein biosynthesis</keyword>
<keyword id="KW-1185">Reference proteome</keyword>
<keyword id="KW-0694">RNA-binding</keyword>
<keyword id="KW-0699">rRNA-binding</keyword>
<keyword id="KW-0820">tRNA-binding</keyword>
<accession>Q8DQ36</accession>
<accession>Q9RNF3</accession>
<reference key="1">
    <citation type="journal article" date="2001" name="Mol. Microbiol.">
        <title>The pavA gene of Streptococcus pneumoniae encodes a fibronectin-binding protein that is essential for virulence.</title>
        <authorList>
            <person name="Holmes A.R."/>
            <person name="McNab R."/>
            <person name="Millsap K.W."/>
            <person name="Rohde M."/>
            <person name="Hammerschmidt S."/>
            <person name="Mawdsley J.L."/>
            <person name="Jenkinson H.F."/>
        </authorList>
    </citation>
    <scope>NUCLEOTIDE SEQUENCE [GENOMIC DNA]</scope>
    <scope>FUNCTION</scope>
    <scope>INTERACTION WITH HUMAN FIBRONECTIN</scope>
    <scope>SUBCELLULAR LOCATION</scope>
    <scope>DOMAIN</scope>
    <scope>DISRUPTION PHENOTYPE</scope>
    <source>
        <strain>R6 / R800</strain>
    </source>
</reference>
<reference key="2">
    <citation type="journal article" date="2001" name="J. Bacteriol.">
        <title>Genome of the bacterium Streptococcus pneumoniae strain R6.</title>
        <authorList>
            <person name="Hoskins J."/>
            <person name="Alborn W.E. Jr."/>
            <person name="Arnold J."/>
            <person name="Blaszczak L.C."/>
            <person name="Burgett S."/>
            <person name="DeHoff B.S."/>
            <person name="Estrem S.T."/>
            <person name="Fritz L."/>
            <person name="Fu D.-J."/>
            <person name="Fuller W."/>
            <person name="Geringer C."/>
            <person name="Gilmour R."/>
            <person name="Glass J.S."/>
            <person name="Khoja H."/>
            <person name="Kraft A.R."/>
            <person name="Lagace R.E."/>
            <person name="LeBlanc D.J."/>
            <person name="Lee L.N."/>
            <person name="Lefkowitz E.J."/>
            <person name="Lu J."/>
            <person name="Matsushima P."/>
            <person name="McAhren S.M."/>
            <person name="McHenney M."/>
            <person name="McLeaster K."/>
            <person name="Mundy C.W."/>
            <person name="Nicas T.I."/>
            <person name="Norris F.H."/>
            <person name="O'Gara M."/>
            <person name="Peery R.B."/>
            <person name="Robertson G.T."/>
            <person name="Rockey P."/>
            <person name="Sun P.-M."/>
            <person name="Winkler M.E."/>
            <person name="Yang Y."/>
            <person name="Young-Bellido M."/>
            <person name="Zhao G."/>
            <person name="Zook C.A."/>
            <person name="Baltz R.H."/>
            <person name="Jaskunas S.R."/>
            <person name="Rosteck P.R. Jr."/>
            <person name="Skatrud P.L."/>
            <person name="Glass J.I."/>
        </authorList>
    </citation>
    <scope>NUCLEOTIDE SEQUENCE [LARGE SCALE GENOMIC DNA]</scope>
    <source>
        <strain>ATCC BAA-255 / R6</strain>
    </source>
</reference>
<reference key="3">
    <citation type="journal article" date="2019" name="Acta Crystallogr. F Struct. Biol. Commun.">
        <title>Crystal structure of the N-terminal domain of the fibronectin-binding protein PavA from Streptococcus pneumoniae.</title>
        <authorList>
            <person name="Manne K."/>
            <person name="Narayana S.V.L."/>
            <person name="Chattopadhyay D."/>
        </authorList>
    </citation>
    <scope>X-RAY CRYSTALLOGRAPHY (2.40 ANGSTROMS) OF 1-266</scope>
</reference>
<proteinExistence type="evidence at protein level"/>
<evidence type="ECO:0000255" key="1">
    <source>
        <dbReference type="HAMAP-Rule" id="MF_00844"/>
    </source>
</evidence>
<evidence type="ECO:0000269" key="2">
    <source>
    </source>
</evidence>
<evidence type="ECO:0000303" key="3">
    <source>
    </source>
</evidence>
<evidence type="ECO:0000305" key="4"/>
<evidence type="ECO:0007829" key="5">
    <source>
        <dbReference type="PDB" id="6PON"/>
    </source>
</evidence>
<protein>
    <recommendedName>
        <fullName evidence="1">Rqc2 homolog RqcH</fullName>
        <shortName evidence="1">RqcH</shortName>
    </recommendedName>
    <alternativeName>
        <fullName evidence="3">Fibronectin-binding protein PavA</fullName>
    </alternativeName>
    <alternativeName>
        <fullName evidence="3">Pneumonococcal adherence and virulence protein A</fullName>
    </alternativeName>
</protein>
<sequence>MSFDGFFLHHIVEELRSELVNGRIQKINQPFEQELVLQIRSNRQSHRLLLSAHPVFGRIQLTQTTFENPAQPSTFIMVLRKYLQGALIESIEQVENDRIVEMTVSNKNEIGDHIQATLIIEIMGKHSNILLVDKSSHKILEVIKHVGFSQNSYRTLLPGSTYIAPPSTESLNPFTIKDEKLFEILQTQELTAKNLQSLFQGLGRDTANELERILVSEKLSAFRNFFNQETKPCLTETSFSPVPFANQAGEPFANLSDLLDTYYKNKAERDRVKQQASELIRRVENELQKNRHKLKKQERELLATDNAEEFRQKGELLTTFLHQVPNDQDQVILDNYYTNQPIMIALDKALTPNQNAQRYFKRYQKLKEAVKYLTDLIEETKATILYLESVETVLNQAGLEEIAEIREELIQTGFIRRRQREKIQKRKKLEQYLASDGKTIIYVGRNNLQNEELTFKMARKEELWFHAKDIPGSHVVISGNLDPSDAVKTDAAELAAYFSQGRLSNLVQVDMIEVKKLNKPTGGKPGFVTYTGQKTLRVTPDSKKIASMKKS</sequence>